<gene>
    <name evidence="2" type="primary">murA1</name>
    <name type="synonym">murA</name>
    <name type="ordered locus">lmo2526</name>
</gene>
<accession>Q8Y4C4</accession>
<proteinExistence type="evidence at protein level"/>
<sequence length="430" mass="45979">MEKIIVRGGKQLNGSVKMEGAKNAVLPVIAATLLASKGTSVLKNVPNLSDVFTINEVLKYLNADVSFVNDEVTVDATGEITSDAPFEYVRKMRASIVVMGPLLARTGSARVALPGGCAIGSRPVDLHLKGFEAMGAVVKIENGYIEATAEKLVGAKVYLDFPSVGATQNIMMAATLAEGTTVIENVAREPEIVDLANFLNQMGARVIGAGTEVIRIEGVKELTATEHSIIPDRIEAGTFMIAAAITGGNVLIEDAVPEHISSLIAKLEEMGVQIIEEENGIRVIGPDKLKAVDVKTMPHPGFPTDMQSQMMVIQMLSEGTSIMTETVFENRFMHVEEMRRMNADMKIEGHSVIISGPAKLQGAEVAATDLRAAAALILAGLVADGYTQVTELKYLDRGYNNFHGKLQALGADVERVDDSKVDVTNLASLF</sequence>
<name>MURA1_LISMO</name>
<comment type="function">
    <text evidence="2">Cell wall formation. Adds enolpyruvyl to UDP-N-acetylglucosamine.</text>
</comment>
<comment type="catalytic activity">
    <reaction evidence="2">
        <text>phosphoenolpyruvate + UDP-N-acetyl-alpha-D-glucosamine = UDP-N-acetyl-3-O-(1-carboxyvinyl)-alpha-D-glucosamine + phosphate</text>
        <dbReference type="Rhea" id="RHEA:18681"/>
        <dbReference type="ChEBI" id="CHEBI:43474"/>
        <dbReference type="ChEBI" id="CHEBI:57705"/>
        <dbReference type="ChEBI" id="CHEBI:58702"/>
        <dbReference type="ChEBI" id="CHEBI:68483"/>
        <dbReference type="EC" id="2.5.1.7"/>
    </reaction>
</comment>
<comment type="pathway">
    <text evidence="2">Cell wall biogenesis; peptidoglycan biosynthesis.</text>
</comment>
<comment type="subcellular location">
    <subcellularLocation>
        <location evidence="2">Cytoplasm</location>
    </subcellularLocation>
</comment>
<comment type="similarity">
    <text evidence="2">Belongs to the EPSP synthase family. MurA subfamily.</text>
</comment>
<organism>
    <name type="scientific">Listeria monocytogenes serovar 1/2a (strain ATCC BAA-679 / EGD-e)</name>
    <dbReference type="NCBI Taxonomy" id="169963"/>
    <lineage>
        <taxon>Bacteria</taxon>
        <taxon>Bacillati</taxon>
        <taxon>Bacillota</taxon>
        <taxon>Bacilli</taxon>
        <taxon>Bacillales</taxon>
        <taxon>Listeriaceae</taxon>
        <taxon>Listeria</taxon>
    </lineage>
</organism>
<protein>
    <recommendedName>
        <fullName evidence="2">UDP-N-acetylglucosamine 1-carboxyvinyltransferase 1</fullName>
        <ecNumber evidence="2">2.5.1.7</ecNumber>
    </recommendedName>
    <alternativeName>
        <fullName evidence="2">Enoylpyruvate transferase 1</fullName>
    </alternativeName>
    <alternativeName>
        <fullName evidence="2">UDP-N-acetylglucosamine enolpyruvyl transferase 1</fullName>
        <shortName evidence="2">EPT 1</shortName>
    </alternativeName>
</protein>
<dbReference type="EC" id="2.5.1.7" evidence="2"/>
<dbReference type="EMBL" id="AL591983">
    <property type="protein sequence ID" value="CAD00604.1"/>
    <property type="molecule type" value="Genomic_DNA"/>
</dbReference>
<dbReference type="PIR" id="AF1390">
    <property type="entry name" value="AF1390"/>
</dbReference>
<dbReference type="RefSeq" id="NP_466049.1">
    <property type="nucleotide sequence ID" value="NC_003210.1"/>
</dbReference>
<dbReference type="RefSeq" id="WP_003723459.1">
    <property type="nucleotide sequence ID" value="NZ_CP149495.1"/>
</dbReference>
<dbReference type="PDB" id="3R38">
    <property type="method" value="X-ray"/>
    <property type="resolution" value="2.23 A"/>
    <property type="chains" value="A=1-430"/>
</dbReference>
<dbReference type="PDBsum" id="3R38"/>
<dbReference type="SMR" id="Q8Y4C4"/>
<dbReference type="STRING" id="169963.gene:17595237"/>
<dbReference type="PaxDb" id="169963-lmo2526"/>
<dbReference type="EnsemblBacteria" id="CAD00604">
    <property type="protein sequence ID" value="CAD00604"/>
    <property type="gene ID" value="CAD00604"/>
</dbReference>
<dbReference type="GeneID" id="984514"/>
<dbReference type="KEGG" id="lmo:lmo2526"/>
<dbReference type="PATRIC" id="fig|169963.11.peg.2587"/>
<dbReference type="eggNOG" id="COG0766">
    <property type="taxonomic scope" value="Bacteria"/>
</dbReference>
<dbReference type="HOGENOM" id="CLU_027387_0_0_9"/>
<dbReference type="OrthoDB" id="9803760at2"/>
<dbReference type="PhylomeDB" id="Q8Y4C4"/>
<dbReference type="BioCyc" id="LMON169963:LMO2526-MONOMER"/>
<dbReference type="UniPathway" id="UPA00219"/>
<dbReference type="EvolutionaryTrace" id="Q8Y4C4"/>
<dbReference type="Proteomes" id="UP000000817">
    <property type="component" value="Chromosome"/>
</dbReference>
<dbReference type="GO" id="GO:0005737">
    <property type="term" value="C:cytoplasm"/>
    <property type="evidence" value="ECO:0007669"/>
    <property type="project" value="UniProtKB-SubCell"/>
</dbReference>
<dbReference type="GO" id="GO:0008760">
    <property type="term" value="F:UDP-N-acetylglucosamine 1-carboxyvinyltransferase activity"/>
    <property type="evidence" value="ECO:0007669"/>
    <property type="project" value="UniProtKB-UniRule"/>
</dbReference>
<dbReference type="GO" id="GO:0051301">
    <property type="term" value="P:cell division"/>
    <property type="evidence" value="ECO:0007669"/>
    <property type="project" value="UniProtKB-KW"/>
</dbReference>
<dbReference type="GO" id="GO:0071555">
    <property type="term" value="P:cell wall organization"/>
    <property type="evidence" value="ECO:0007669"/>
    <property type="project" value="UniProtKB-KW"/>
</dbReference>
<dbReference type="GO" id="GO:0009252">
    <property type="term" value="P:peptidoglycan biosynthetic process"/>
    <property type="evidence" value="ECO:0007669"/>
    <property type="project" value="UniProtKB-UniRule"/>
</dbReference>
<dbReference type="GO" id="GO:0008360">
    <property type="term" value="P:regulation of cell shape"/>
    <property type="evidence" value="ECO:0007669"/>
    <property type="project" value="UniProtKB-KW"/>
</dbReference>
<dbReference type="GO" id="GO:0019277">
    <property type="term" value="P:UDP-N-acetylgalactosamine biosynthetic process"/>
    <property type="evidence" value="ECO:0007669"/>
    <property type="project" value="InterPro"/>
</dbReference>
<dbReference type="CDD" id="cd01555">
    <property type="entry name" value="UdpNAET"/>
    <property type="match status" value="1"/>
</dbReference>
<dbReference type="FunFam" id="3.65.10.10:FF:000001">
    <property type="entry name" value="UDP-N-acetylglucosamine 1-carboxyvinyltransferase"/>
    <property type="match status" value="1"/>
</dbReference>
<dbReference type="Gene3D" id="3.65.10.10">
    <property type="entry name" value="Enolpyruvate transferase domain"/>
    <property type="match status" value="2"/>
</dbReference>
<dbReference type="HAMAP" id="MF_00111">
    <property type="entry name" value="MurA"/>
    <property type="match status" value="1"/>
</dbReference>
<dbReference type="InterPro" id="IPR001986">
    <property type="entry name" value="Enolpyruvate_Tfrase_dom"/>
</dbReference>
<dbReference type="InterPro" id="IPR036968">
    <property type="entry name" value="Enolpyruvate_Tfrase_sf"/>
</dbReference>
<dbReference type="InterPro" id="IPR050068">
    <property type="entry name" value="MurA_subfamily"/>
</dbReference>
<dbReference type="InterPro" id="IPR013792">
    <property type="entry name" value="RNA3'P_cycl/enolpyr_Trfase_a/b"/>
</dbReference>
<dbReference type="InterPro" id="IPR005750">
    <property type="entry name" value="UDP_GlcNAc_COvinyl_MurA"/>
</dbReference>
<dbReference type="NCBIfam" id="TIGR01072">
    <property type="entry name" value="murA"/>
    <property type="match status" value="1"/>
</dbReference>
<dbReference type="NCBIfam" id="NF006873">
    <property type="entry name" value="PRK09369.1"/>
    <property type="match status" value="1"/>
</dbReference>
<dbReference type="PANTHER" id="PTHR43783">
    <property type="entry name" value="UDP-N-ACETYLGLUCOSAMINE 1-CARBOXYVINYLTRANSFERASE"/>
    <property type="match status" value="1"/>
</dbReference>
<dbReference type="PANTHER" id="PTHR43783:SF1">
    <property type="entry name" value="UDP-N-ACETYLGLUCOSAMINE 1-CARBOXYVINYLTRANSFERASE"/>
    <property type="match status" value="1"/>
</dbReference>
<dbReference type="Pfam" id="PF00275">
    <property type="entry name" value="EPSP_synthase"/>
    <property type="match status" value="1"/>
</dbReference>
<dbReference type="SUPFAM" id="SSF55205">
    <property type="entry name" value="EPT/RTPC-like"/>
    <property type="match status" value="1"/>
</dbReference>
<keyword id="KW-0002">3D-structure</keyword>
<keyword id="KW-0131">Cell cycle</keyword>
<keyword id="KW-0132">Cell division</keyword>
<keyword id="KW-0133">Cell shape</keyword>
<keyword id="KW-0961">Cell wall biogenesis/degradation</keyword>
<keyword id="KW-0963">Cytoplasm</keyword>
<keyword id="KW-0573">Peptidoglycan synthesis</keyword>
<keyword id="KW-0670">Pyruvate</keyword>
<keyword id="KW-1185">Reference proteome</keyword>
<keyword id="KW-0808">Transferase</keyword>
<reference key="1">
    <citation type="journal article" date="2001" name="Science">
        <title>Comparative genomics of Listeria species.</title>
        <authorList>
            <person name="Glaser P."/>
            <person name="Frangeul L."/>
            <person name="Buchrieser C."/>
            <person name="Rusniok C."/>
            <person name="Amend A."/>
            <person name="Baquero F."/>
            <person name="Berche P."/>
            <person name="Bloecker H."/>
            <person name="Brandt P."/>
            <person name="Chakraborty T."/>
            <person name="Charbit A."/>
            <person name="Chetouani F."/>
            <person name="Couve E."/>
            <person name="de Daruvar A."/>
            <person name="Dehoux P."/>
            <person name="Domann E."/>
            <person name="Dominguez-Bernal G."/>
            <person name="Duchaud E."/>
            <person name="Durant L."/>
            <person name="Dussurget O."/>
            <person name="Entian K.-D."/>
            <person name="Fsihi H."/>
            <person name="Garcia-del Portillo F."/>
            <person name="Garrido P."/>
            <person name="Gautier L."/>
            <person name="Goebel W."/>
            <person name="Gomez-Lopez N."/>
            <person name="Hain T."/>
            <person name="Hauf J."/>
            <person name="Jackson D."/>
            <person name="Jones L.-M."/>
            <person name="Kaerst U."/>
            <person name="Kreft J."/>
            <person name="Kuhn M."/>
            <person name="Kunst F."/>
            <person name="Kurapkat G."/>
            <person name="Madueno E."/>
            <person name="Maitournam A."/>
            <person name="Mata Vicente J."/>
            <person name="Ng E."/>
            <person name="Nedjari H."/>
            <person name="Nordsiek G."/>
            <person name="Novella S."/>
            <person name="de Pablos B."/>
            <person name="Perez-Diaz J.-C."/>
            <person name="Purcell R."/>
            <person name="Remmel B."/>
            <person name="Rose M."/>
            <person name="Schlueter T."/>
            <person name="Simoes N."/>
            <person name="Tierrez A."/>
            <person name="Vazquez-Boland J.-A."/>
            <person name="Voss H."/>
            <person name="Wehland J."/>
            <person name="Cossart P."/>
        </authorList>
    </citation>
    <scope>NUCLEOTIDE SEQUENCE [LARGE SCALE GENOMIC DNA]</scope>
    <source>
        <strain>ATCC BAA-679 / EGD-e</strain>
    </source>
</reference>
<reference evidence="3" key="2">
    <citation type="submission" date="2011-03" db="PDB data bank">
        <title>2.23 Angstrom resolution crystal structure of UDP-N-acetylglucosamine 1-carboxyvinyltransferase (murA) from Listeria monocytogenes EGD-e.</title>
        <authorList>
            <consortium name="Center for structural genomics of infectious diseases (CSGID)"/>
        </authorList>
    </citation>
    <scope>X-RAY CRYSTALLOGRAPHY (2.23 ANGSTROMS)</scope>
</reference>
<feature type="chain" id="PRO_0000178887" description="UDP-N-acetylglucosamine 1-carboxyvinyltransferase 1">
    <location>
        <begin position="1"/>
        <end position="430"/>
    </location>
</feature>
<feature type="active site" description="Proton donor" evidence="2">
    <location>
        <position position="117"/>
    </location>
</feature>
<feature type="binding site" evidence="1">
    <location>
        <begin position="22"/>
        <end position="23"/>
    </location>
    <ligand>
        <name>phosphoenolpyruvate</name>
        <dbReference type="ChEBI" id="CHEBI:58702"/>
    </ligand>
</feature>
<feature type="binding site" evidence="1">
    <location>
        <position position="93"/>
    </location>
    <ligand>
        <name>UDP-N-acetyl-alpha-D-glucosamine</name>
        <dbReference type="ChEBI" id="CHEBI:57705"/>
    </ligand>
</feature>
<feature type="binding site" evidence="1">
    <location>
        <begin position="122"/>
        <end position="126"/>
    </location>
    <ligand>
        <name>UDP-N-acetyl-alpha-D-glucosamine</name>
        <dbReference type="ChEBI" id="CHEBI:57705"/>
    </ligand>
</feature>
<feature type="binding site" evidence="1">
    <location>
        <position position="305"/>
    </location>
    <ligand>
        <name>UDP-N-acetyl-alpha-D-glucosamine</name>
        <dbReference type="ChEBI" id="CHEBI:57705"/>
    </ligand>
</feature>
<feature type="binding site" evidence="1">
    <location>
        <position position="327"/>
    </location>
    <ligand>
        <name>UDP-N-acetyl-alpha-D-glucosamine</name>
        <dbReference type="ChEBI" id="CHEBI:57705"/>
    </ligand>
</feature>
<feature type="modified residue" description="2-(S-cysteinyl)pyruvic acid O-phosphothioketal" evidence="2">
    <location>
        <position position="117"/>
    </location>
</feature>
<feature type="strand" evidence="4">
    <location>
        <begin position="3"/>
        <end position="7"/>
    </location>
</feature>
<feature type="strand" evidence="4">
    <location>
        <begin position="13"/>
        <end position="17"/>
    </location>
</feature>
<feature type="helix" evidence="4">
    <location>
        <begin position="22"/>
        <end position="31"/>
    </location>
</feature>
<feature type="helix" evidence="4">
    <location>
        <begin position="32"/>
        <end position="34"/>
    </location>
</feature>
<feature type="strand" evidence="4">
    <location>
        <begin position="35"/>
        <end position="38"/>
    </location>
</feature>
<feature type="strand" evidence="4">
    <location>
        <begin position="40"/>
        <end position="44"/>
    </location>
</feature>
<feature type="helix" evidence="4">
    <location>
        <begin position="49"/>
        <end position="60"/>
    </location>
</feature>
<feature type="strand" evidence="4">
    <location>
        <begin position="64"/>
        <end position="68"/>
    </location>
</feature>
<feature type="strand" evidence="4">
    <location>
        <begin position="71"/>
        <end position="75"/>
    </location>
</feature>
<feature type="helix" evidence="4">
    <location>
        <begin position="87"/>
        <end position="91"/>
    </location>
</feature>
<feature type="helix" evidence="4">
    <location>
        <begin position="93"/>
        <end position="98"/>
    </location>
</feature>
<feature type="helix" evidence="4">
    <location>
        <begin position="99"/>
        <end position="106"/>
    </location>
</feature>
<feature type="strand" evidence="4">
    <location>
        <begin position="107"/>
        <end position="112"/>
    </location>
</feature>
<feature type="strand" evidence="4">
    <location>
        <begin position="118"/>
        <end position="121"/>
    </location>
</feature>
<feature type="helix" evidence="4">
    <location>
        <begin position="125"/>
        <end position="133"/>
    </location>
</feature>
<feature type="strand" evidence="4">
    <location>
        <begin position="137"/>
        <end position="141"/>
    </location>
</feature>
<feature type="strand" evidence="4">
    <location>
        <begin position="144"/>
        <end position="148"/>
    </location>
</feature>
<feature type="strand" evidence="4">
    <location>
        <begin position="156"/>
        <end position="158"/>
    </location>
</feature>
<feature type="helix" evidence="4">
    <location>
        <begin position="164"/>
        <end position="174"/>
    </location>
</feature>
<feature type="strand" evidence="4">
    <location>
        <begin position="177"/>
        <end position="185"/>
    </location>
</feature>
<feature type="helix" evidence="4">
    <location>
        <begin position="190"/>
        <end position="201"/>
    </location>
</feature>
<feature type="strand" evidence="4">
    <location>
        <begin position="211"/>
        <end position="217"/>
    </location>
</feature>
<feature type="strand" evidence="4">
    <location>
        <begin position="226"/>
        <end position="228"/>
    </location>
</feature>
<feature type="helix" evidence="4">
    <location>
        <begin position="233"/>
        <end position="245"/>
    </location>
</feature>
<feature type="strand" evidence="4">
    <location>
        <begin position="249"/>
        <end position="254"/>
    </location>
</feature>
<feature type="helix" evidence="4">
    <location>
        <begin position="257"/>
        <end position="260"/>
    </location>
</feature>
<feature type="helix" evidence="4">
    <location>
        <begin position="261"/>
        <end position="269"/>
    </location>
</feature>
<feature type="strand" evidence="4">
    <location>
        <begin position="273"/>
        <end position="276"/>
    </location>
</feature>
<feature type="strand" evidence="4">
    <location>
        <begin position="281"/>
        <end position="284"/>
    </location>
</feature>
<feature type="strand" evidence="4">
    <location>
        <begin position="294"/>
        <end position="296"/>
    </location>
</feature>
<feature type="helix" evidence="4">
    <location>
        <begin position="304"/>
        <end position="306"/>
    </location>
</feature>
<feature type="helix" evidence="4">
    <location>
        <begin position="307"/>
        <end position="316"/>
    </location>
</feature>
<feature type="strand" evidence="4">
    <location>
        <begin position="317"/>
        <end position="324"/>
    </location>
</feature>
<feature type="helix" evidence="4">
    <location>
        <begin position="335"/>
        <end position="340"/>
    </location>
</feature>
<feature type="strand" evidence="4">
    <location>
        <begin position="345"/>
        <end position="348"/>
    </location>
</feature>
<feature type="strand" evidence="4">
    <location>
        <begin position="351"/>
        <end position="355"/>
    </location>
</feature>
<feature type="strand" evidence="4">
    <location>
        <begin position="364"/>
        <end position="366"/>
    </location>
</feature>
<feature type="helix" evidence="4">
    <location>
        <begin position="370"/>
        <end position="382"/>
    </location>
</feature>
<feature type="strand" evidence="4">
    <location>
        <begin position="383"/>
        <end position="390"/>
    </location>
</feature>
<feature type="helix" evidence="4">
    <location>
        <begin position="393"/>
        <end position="396"/>
    </location>
</feature>
<feature type="helix" evidence="4">
    <location>
        <begin position="402"/>
        <end position="408"/>
    </location>
</feature>
<feature type="strand" evidence="4">
    <location>
        <begin position="412"/>
        <end position="416"/>
    </location>
</feature>
<feature type="turn" evidence="4">
    <location>
        <begin position="418"/>
        <end position="420"/>
    </location>
</feature>
<feature type="helix" evidence="4">
    <location>
        <begin position="423"/>
        <end position="428"/>
    </location>
</feature>
<evidence type="ECO:0000250" key="1">
    <source>
        <dbReference type="UniProtKB" id="P0A749"/>
    </source>
</evidence>
<evidence type="ECO:0000255" key="2">
    <source>
        <dbReference type="HAMAP-Rule" id="MF_00111"/>
    </source>
</evidence>
<evidence type="ECO:0007744" key="3">
    <source>
        <dbReference type="PDB" id="3R38"/>
    </source>
</evidence>
<evidence type="ECO:0007829" key="4">
    <source>
        <dbReference type="PDB" id="3R38"/>
    </source>
</evidence>